<protein>
    <recommendedName>
        <fullName evidence="1">Maintenance of mitochondrial morphology protein 1</fullName>
    </recommendedName>
</protein>
<feature type="chain" id="PRO_0000384232" description="Maintenance of mitochondrial morphology protein 1">
    <location>
        <begin position="1"/>
        <end position="291"/>
    </location>
</feature>
<feature type="topological domain" description="Lumenal" evidence="1">
    <location>
        <begin position="1"/>
        <end position="16"/>
    </location>
</feature>
<feature type="transmembrane region" description="Helical" evidence="1">
    <location>
        <begin position="17"/>
        <end position="37"/>
    </location>
</feature>
<feature type="topological domain" description="Cytoplasmic" evidence="1">
    <location>
        <begin position="38"/>
        <end position="291"/>
    </location>
</feature>
<feature type="domain" description="SMP-LTD" evidence="1">
    <location>
        <begin position="73"/>
        <end position="277"/>
    </location>
</feature>
<proteinExistence type="inferred from homology"/>
<keyword id="KW-0256">Endoplasmic reticulum</keyword>
<keyword id="KW-0445">Lipid transport</keyword>
<keyword id="KW-0446">Lipid-binding</keyword>
<keyword id="KW-0472">Membrane</keyword>
<keyword id="KW-1185">Reference proteome</keyword>
<keyword id="KW-0812">Transmembrane</keyword>
<keyword id="KW-1133">Transmembrane helix</keyword>
<keyword id="KW-0813">Transport</keyword>
<accession>B0CQL3</accession>
<organism>
    <name type="scientific">Laccaria bicolor (strain S238N-H82 / ATCC MYA-4686)</name>
    <name type="common">Bicoloured deceiver</name>
    <name type="synonym">Laccaria laccata var. bicolor</name>
    <dbReference type="NCBI Taxonomy" id="486041"/>
    <lineage>
        <taxon>Eukaryota</taxon>
        <taxon>Fungi</taxon>
        <taxon>Dikarya</taxon>
        <taxon>Basidiomycota</taxon>
        <taxon>Agaricomycotina</taxon>
        <taxon>Agaricomycetes</taxon>
        <taxon>Agaricomycetidae</taxon>
        <taxon>Agaricales</taxon>
        <taxon>Agaricineae</taxon>
        <taxon>Hydnangiaceae</taxon>
        <taxon>Laccaria</taxon>
    </lineage>
</organism>
<name>MMM1_LACBS</name>
<comment type="function">
    <text evidence="1">Component of the ERMES/MDM complex, which serves as a molecular tether to connect the endoplasmic reticulum (ER) and mitochondria. Components of this complex are involved in the control of mitochondrial shape and protein biogenesis, and function in nonvesicular lipid trafficking between the ER and mitochondria. The MDM12-MMM1 subcomplex functions in the major beta-barrel assembly pathway that is responsible for biogenesis of all outer membrane beta-barrel proteins, and acts in a late step after the SAM complex. The MDM10-MDM12-MMM1 subcomplex further acts in the TOM40-specific pathway after the action of the MDM12-MMM1 complex. Essential for establishing and maintaining the structure of mitochondria and maintenance of mtDNA nucleoids.</text>
</comment>
<comment type="subunit">
    <text evidence="1">Homodimer. Component of the ER-mitochondria encounter structure (ERMES) or MDM complex, composed of MMM1, MDM10, MDM12 and MDM34. A MMM1 homodimer associates with one molecule of MDM12 on each side in a pairwise head-to-tail manner, and the SMP-LTD domains of MMM1 and MDM12 generate a continuous hydrophobic tunnel for phospholipid trafficking.</text>
</comment>
<comment type="subcellular location">
    <subcellularLocation>
        <location evidence="1">Endoplasmic reticulum membrane</location>
        <topology evidence="1">Single-pass type I membrane protein</topology>
    </subcellularLocation>
    <text evidence="1">The ERMES/MDM complex localizes to a few discrete foci (around 10 per single cell), that represent mitochondria-endoplasmic reticulum junctions. These foci are often found next to mtDNA nucleoids.</text>
</comment>
<comment type="domain">
    <text evidence="1">The SMP-LTD domain is a barrel-like domain that can bind various types of glycerophospholipids in its interior and mediate their transfer between two adjacent bilayers.</text>
</comment>
<comment type="similarity">
    <text evidence="1">Belongs to the MMM1 family.</text>
</comment>
<dbReference type="EMBL" id="DS547091">
    <property type="protein sequence ID" value="EDR15053.1"/>
    <property type="molecule type" value="Genomic_DNA"/>
</dbReference>
<dbReference type="RefSeq" id="XP_001873261.1">
    <property type="nucleotide sequence ID" value="XM_001873226.1"/>
</dbReference>
<dbReference type="SMR" id="B0CQL3"/>
<dbReference type="FunCoup" id="B0CQL3">
    <property type="interactions" value="83"/>
</dbReference>
<dbReference type="STRING" id="486041.B0CQL3"/>
<dbReference type="GeneID" id="6069796"/>
<dbReference type="KEGG" id="lbc:LACBIDRAFT_300811"/>
<dbReference type="HOGENOM" id="CLU_032730_0_0_1"/>
<dbReference type="InParanoid" id="B0CQL3"/>
<dbReference type="OrthoDB" id="5599157at2759"/>
<dbReference type="Proteomes" id="UP000001194">
    <property type="component" value="Unassembled WGS sequence"/>
</dbReference>
<dbReference type="GO" id="GO:0005789">
    <property type="term" value="C:endoplasmic reticulum membrane"/>
    <property type="evidence" value="ECO:0007669"/>
    <property type="project" value="UniProtKB-SubCell"/>
</dbReference>
<dbReference type="GO" id="GO:0032865">
    <property type="term" value="C:ERMES complex"/>
    <property type="evidence" value="ECO:0007669"/>
    <property type="project" value="UniProtKB-UniRule"/>
</dbReference>
<dbReference type="GO" id="GO:0008289">
    <property type="term" value="F:lipid binding"/>
    <property type="evidence" value="ECO:0007669"/>
    <property type="project" value="UniProtKB-KW"/>
</dbReference>
<dbReference type="GO" id="GO:0000002">
    <property type="term" value="P:mitochondrial genome maintenance"/>
    <property type="evidence" value="ECO:0007669"/>
    <property type="project" value="UniProtKB-UniRule"/>
</dbReference>
<dbReference type="GO" id="GO:1990456">
    <property type="term" value="P:mitochondrion-endoplasmic reticulum membrane tethering"/>
    <property type="evidence" value="ECO:0007669"/>
    <property type="project" value="TreeGrafter"/>
</dbReference>
<dbReference type="GO" id="GO:0015914">
    <property type="term" value="P:phospholipid transport"/>
    <property type="evidence" value="ECO:0007669"/>
    <property type="project" value="TreeGrafter"/>
</dbReference>
<dbReference type="GO" id="GO:0045040">
    <property type="term" value="P:protein insertion into mitochondrial outer membrane"/>
    <property type="evidence" value="ECO:0007669"/>
    <property type="project" value="UniProtKB-UniRule"/>
</dbReference>
<dbReference type="CDD" id="cd21671">
    <property type="entry name" value="SMP_Mmm1"/>
    <property type="match status" value="1"/>
</dbReference>
<dbReference type="HAMAP" id="MF_03103">
    <property type="entry name" value="Mmm1"/>
    <property type="match status" value="1"/>
</dbReference>
<dbReference type="InterPro" id="IPR027537">
    <property type="entry name" value="Mmm1"/>
</dbReference>
<dbReference type="InterPro" id="IPR019411">
    <property type="entry name" value="MMM1_dom"/>
</dbReference>
<dbReference type="InterPro" id="IPR031468">
    <property type="entry name" value="SMP_LBD"/>
</dbReference>
<dbReference type="PANTHER" id="PTHR13466:SF0">
    <property type="entry name" value="SMP-LTD DOMAIN-CONTAINING PROTEIN"/>
    <property type="match status" value="1"/>
</dbReference>
<dbReference type="PANTHER" id="PTHR13466">
    <property type="entry name" value="TEX2 PROTEIN-RELATED"/>
    <property type="match status" value="1"/>
</dbReference>
<dbReference type="Pfam" id="PF10296">
    <property type="entry name" value="MMM1"/>
    <property type="match status" value="2"/>
</dbReference>
<dbReference type="PROSITE" id="PS51847">
    <property type="entry name" value="SMP"/>
    <property type="match status" value="1"/>
</dbReference>
<reference key="1">
    <citation type="journal article" date="2008" name="Nature">
        <title>The genome of Laccaria bicolor provides insights into mycorrhizal symbiosis.</title>
        <authorList>
            <person name="Martin F."/>
            <person name="Aerts A."/>
            <person name="Ahren D."/>
            <person name="Brun A."/>
            <person name="Danchin E.G.J."/>
            <person name="Duchaussoy F."/>
            <person name="Gibon J."/>
            <person name="Kohler A."/>
            <person name="Lindquist E."/>
            <person name="Pereda V."/>
            <person name="Salamov A."/>
            <person name="Shapiro H.J."/>
            <person name="Wuyts J."/>
            <person name="Blaudez D."/>
            <person name="Buee M."/>
            <person name="Brokstein P."/>
            <person name="Canbaeck B."/>
            <person name="Cohen D."/>
            <person name="Courty P.E."/>
            <person name="Coutinho P.M."/>
            <person name="Delaruelle C."/>
            <person name="Detter J.C."/>
            <person name="Deveau A."/>
            <person name="DiFazio S."/>
            <person name="Duplessis S."/>
            <person name="Fraissinet-Tachet L."/>
            <person name="Lucic E."/>
            <person name="Frey-Klett P."/>
            <person name="Fourrey C."/>
            <person name="Feussner I."/>
            <person name="Gay G."/>
            <person name="Grimwood J."/>
            <person name="Hoegger P.J."/>
            <person name="Jain P."/>
            <person name="Kilaru S."/>
            <person name="Labbe J."/>
            <person name="Lin Y.C."/>
            <person name="Legue V."/>
            <person name="Le Tacon F."/>
            <person name="Marmeisse R."/>
            <person name="Melayah D."/>
            <person name="Montanini B."/>
            <person name="Muratet M."/>
            <person name="Nehls U."/>
            <person name="Niculita-Hirzel H."/>
            <person name="Oudot-Le Secq M.P."/>
            <person name="Peter M."/>
            <person name="Quesneville H."/>
            <person name="Rajashekar B."/>
            <person name="Reich M."/>
            <person name="Rouhier N."/>
            <person name="Schmutz J."/>
            <person name="Yin T."/>
            <person name="Chalot M."/>
            <person name="Henrissat B."/>
            <person name="Kuees U."/>
            <person name="Lucas S."/>
            <person name="Van de Peer Y."/>
            <person name="Podila G.K."/>
            <person name="Polle A."/>
            <person name="Pukkila P.J."/>
            <person name="Richardson P.M."/>
            <person name="Rouze P."/>
            <person name="Sanders I.R."/>
            <person name="Stajich J.E."/>
            <person name="Tunlid A."/>
            <person name="Tuskan G."/>
            <person name="Grigoriev I.V."/>
        </authorList>
    </citation>
    <scope>NUCLEOTIDE SEQUENCE [LARGE SCALE GENOMIC DNA]</scope>
    <source>
        <strain>S238N-H82 / ATCC MYA-4686</strain>
    </source>
</reference>
<gene>
    <name evidence="1" type="primary">MMM1</name>
    <name type="ORF">LACBIDRAFT_300811</name>
</gene>
<sequence>MPNNYVFSLQPTFTQGLILGQLSILVLLGMILKFLFLDSTQHPFESSSVDTDLLRRKRGLEPRHLPEELLHDNAESAEWFNVLLRQIVDVYRSKLRDGLPGIEGDEIARRRIENYANKIRPSGFLDHIEIHSVDLGVSAPELFNARVRQNAPSPAETEFDATYTDTLSLSLSTSYLFNYPMQSFARLPISLTISLSQFKSSICIIPPEITSPTPVLTISISPNFVLDLSTTSLMGSRAKLANVPKLHELIQHQVRRILAARATWKVVLPGLASVVDVKEEIKKEMSDADLS</sequence>
<evidence type="ECO:0000255" key="1">
    <source>
        <dbReference type="HAMAP-Rule" id="MF_03103"/>
    </source>
</evidence>